<evidence type="ECO:0000250" key="1">
    <source>
        <dbReference type="UniProtKB" id="P48237"/>
    </source>
</evidence>
<evidence type="ECO:0000255" key="2"/>
<evidence type="ECO:0000255" key="3">
    <source>
        <dbReference type="PROSITE-ProRule" id="PRU00708"/>
    </source>
</evidence>
<evidence type="ECO:0000256" key="4">
    <source>
        <dbReference type="SAM" id="MobiDB-lite"/>
    </source>
</evidence>
<evidence type="ECO:0000305" key="5"/>
<accession>Q5A8W9</accession>
<accession>A0A1D8PQ70</accession>
<accession>Q5A8P4</accession>
<feature type="transit peptide" description="Mitochondrion" evidence="2">
    <location>
        <begin position="1"/>
        <end position="90"/>
    </location>
</feature>
<feature type="chain" id="PRO_0000402256" description="Mitochondrial 15S rRNA processing factor CCM1" evidence="2">
    <location>
        <begin position="91"/>
        <end position="768"/>
    </location>
</feature>
<feature type="repeat" description="PPR 1" evidence="3">
    <location>
        <begin position="274"/>
        <end position="308"/>
    </location>
</feature>
<feature type="repeat" description="PPR 2" evidence="3">
    <location>
        <begin position="309"/>
        <end position="344"/>
    </location>
</feature>
<feature type="repeat" description="PPR 3" evidence="3">
    <location>
        <begin position="347"/>
        <end position="381"/>
    </location>
</feature>
<feature type="repeat" description="PPR 4" evidence="3">
    <location>
        <begin position="382"/>
        <end position="417"/>
    </location>
</feature>
<feature type="repeat" description="PPR 5" evidence="3">
    <location>
        <begin position="418"/>
        <end position="452"/>
    </location>
</feature>
<feature type="repeat" description="PPR 6" evidence="3">
    <location>
        <begin position="634"/>
        <end position="664"/>
    </location>
</feature>
<feature type="region of interest" description="Disordered" evidence="4">
    <location>
        <begin position="28"/>
        <end position="65"/>
    </location>
</feature>
<feature type="region of interest" description="Disordered" evidence="4">
    <location>
        <begin position="90"/>
        <end position="114"/>
    </location>
</feature>
<feature type="region of interest" description="Disordered" evidence="4">
    <location>
        <begin position="583"/>
        <end position="609"/>
    </location>
</feature>
<feature type="compositionally biased region" description="Basic and acidic residues" evidence="4">
    <location>
        <begin position="43"/>
        <end position="53"/>
    </location>
</feature>
<feature type="compositionally biased region" description="Polar residues" evidence="4">
    <location>
        <begin position="55"/>
        <end position="65"/>
    </location>
</feature>
<feature type="compositionally biased region" description="Basic and acidic residues" evidence="4">
    <location>
        <begin position="583"/>
        <end position="596"/>
    </location>
</feature>
<feature type="compositionally biased region" description="Polar residues" evidence="4">
    <location>
        <begin position="597"/>
        <end position="609"/>
    </location>
</feature>
<organism>
    <name type="scientific">Candida albicans (strain SC5314 / ATCC MYA-2876)</name>
    <name type="common">Yeast</name>
    <dbReference type="NCBI Taxonomy" id="237561"/>
    <lineage>
        <taxon>Eukaryota</taxon>
        <taxon>Fungi</taxon>
        <taxon>Dikarya</taxon>
        <taxon>Ascomycota</taxon>
        <taxon>Saccharomycotina</taxon>
        <taxon>Pichiomycetes</taxon>
        <taxon>Debaryomycetaceae</taxon>
        <taxon>Candida/Lodderomyces clade</taxon>
        <taxon>Candida</taxon>
    </lineage>
</organism>
<proteinExistence type="inferred from homology"/>
<sequence>MIRLIRWNNVQSLVFKRCLFVPSNSLTNKRKRRIPPSKPRSSNRKDGDIEPYRMTDQNQTPNTGSIARLPAEVKKELKDLRSFTKVIAQHLKPEQENDSLTSAEKPDTSQLPPIDIEEATDDIFGEISGTKKLSANAVPPPPPPPGLDIPDEIKERLGLLSELLVPAKTSNNKLPEKQVENNWKLLLSQLDQAGGLSGLSKRSVSKFFSKIPPKNLKNLIPMIENMYNKAEMSIPHPIYYMFVRSLTLGDKISDSQMQLINKYFQEISKQTDLKIDHYETMILAYVKNNHMEKIDGILAQMKKKNIEISKMIYTSIVRGYIFYQKDHQRALDTFDSMKFLSQKTQPDEKVYTDVIVSCVMHREIERALDLYYELKDKGMNVNQNLLSTLAKGCSRSKQFKTQAWNFLFQVYDHGWVPNLQTYEHMLYIAARDGDVELTRVLFYKMLQTNSVTIRAFRYLILSYSKYVPPHKRKEKHLILLNHKGQLFRQNILQDVDFSKPVHGFPFLPSSHIPDSKFVLAESSAIWAHTVMNNPSFLRQQTLVASYVSIALELGDFTEFKDRFDSASYLNTDGIPKVREIEIIEPRQDEPTEKATTTEEQNASSETDNNSLIRSPILNQLQQNINDNQFKAPRDSYLYNLAIKAAGKFKNYGFAQEILHERGQFRKSNSFKLLSPKQQNQDDFQFAGYLVECWTNMNLLEDAYAVVLSSVDRFPWSWRELGVLNNAAMKLGSLELAEAVRKVAQVTQVKHHGKIKRQDFKTYVMKRGY</sequence>
<keyword id="KW-0496">Mitochondrion</keyword>
<keyword id="KW-0507">mRNA processing</keyword>
<keyword id="KW-0508">mRNA splicing</keyword>
<keyword id="KW-1185">Reference proteome</keyword>
<keyword id="KW-0677">Repeat</keyword>
<keyword id="KW-0809">Transit peptide</keyword>
<dbReference type="EMBL" id="CP017628">
    <property type="protein sequence ID" value="AOW30274.1"/>
    <property type="molecule type" value="Genomic_DNA"/>
</dbReference>
<dbReference type="RefSeq" id="XP_718046.1">
    <property type="nucleotide sequence ID" value="XM_712953.1"/>
</dbReference>
<dbReference type="SMR" id="Q5A8W9"/>
<dbReference type="FunCoup" id="Q5A8W9">
    <property type="interactions" value="120"/>
</dbReference>
<dbReference type="STRING" id="237561.Q5A8W9"/>
<dbReference type="EnsemblFungi" id="C6_03440W_A-T">
    <property type="protein sequence ID" value="C6_03440W_A-T-p1"/>
    <property type="gene ID" value="C6_03440W_A"/>
</dbReference>
<dbReference type="GeneID" id="3640274"/>
<dbReference type="KEGG" id="cal:CAALFM_C603440WA"/>
<dbReference type="CGD" id="CAL0000174731">
    <property type="gene designation" value="orf19.13127"/>
</dbReference>
<dbReference type="VEuPathDB" id="FungiDB:C6_03440W_A"/>
<dbReference type="eggNOG" id="ENOG502QUX2">
    <property type="taxonomic scope" value="Eukaryota"/>
</dbReference>
<dbReference type="HOGENOM" id="CLU_019745_0_0_1"/>
<dbReference type="InParanoid" id="Q5A8W9"/>
<dbReference type="OrthoDB" id="185373at2759"/>
<dbReference type="PRO" id="PR:Q5A8W9"/>
<dbReference type="Proteomes" id="UP000000559">
    <property type="component" value="Chromosome 6"/>
</dbReference>
<dbReference type="GO" id="GO:0005739">
    <property type="term" value="C:mitochondrion"/>
    <property type="evidence" value="ECO:0007669"/>
    <property type="project" value="UniProtKB-SubCell"/>
</dbReference>
<dbReference type="GO" id="GO:0006397">
    <property type="term" value="P:mRNA processing"/>
    <property type="evidence" value="ECO:0007669"/>
    <property type="project" value="UniProtKB-KW"/>
</dbReference>
<dbReference type="GO" id="GO:0008380">
    <property type="term" value="P:RNA splicing"/>
    <property type="evidence" value="ECO:0007669"/>
    <property type="project" value="UniProtKB-KW"/>
</dbReference>
<dbReference type="Gene3D" id="1.25.40.10">
    <property type="entry name" value="Tetratricopeptide repeat domain"/>
    <property type="match status" value="2"/>
</dbReference>
<dbReference type="InterPro" id="IPR002885">
    <property type="entry name" value="Pentatricopeptide_rpt"/>
</dbReference>
<dbReference type="InterPro" id="IPR011990">
    <property type="entry name" value="TPR-like_helical_dom_sf"/>
</dbReference>
<dbReference type="PANTHER" id="PTHR47447">
    <property type="entry name" value="OS03G0856100 PROTEIN"/>
    <property type="match status" value="1"/>
</dbReference>
<dbReference type="PANTHER" id="PTHR47447:SF17">
    <property type="entry name" value="OS12G0638900 PROTEIN"/>
    <property type="match status" value="1"/>
</dbReference>
<dbReference type="Pfam" id="PF01535">
    <property type="entry name" value="PPR"/>
    <property type="match status" value="2"/>
</dbReference>
<dbReference type="PROSITE" id="PS51375">
    <property type="entry name" value="PPR"/>
    <property type="match status" value="6"/>
</dbReference>
<reference key="1">
    <citation type="journal article" date="2004" name="Proc. Natl. Acad. Sci. U.S.A.">
        <title>The diploid genome sequence of Candida albicans.</title>
        <authorList>
            <person name="Jones T."/>
            <person name="Federspiel N.A."/>
            <person name="Chibana H."/>
            <person name="Dungan J."/>
            <person name="Kalman S."/>
            <person name="Magee B.B."/>
            <person name="Newport G."/>
            <person name="Thorstenson Y.R."/>
            <person name="Agabian N."/>
            <person name="Magee P.T."/>
            <person name="Davis R.W."/>
            <person name="Scherer S."/>
        </authorList>
    </citation>
    <scope>NUCLEOTIDE SEQUENCE [LARGE SCALE GENOMIC DNA]</scope>
    <source>
        <strain>SC5314 / ATCC MYA-2876</strain>
    </source>
</reference>
<reference key="2">
    <citation type="journal article" date="2007" name="Genome Biol.">
        <title>Assembly of the Candida albicans genome into sixteen supercontigs aligned on the eight chromosomes.</title>
        <authorList>
            <person name="van het Hoog M."/>
            <person name="Rast T.J."/>
            <person name="Martchenko M."/>
            <person name="Grindle S."/>
            <person name="Dignard D."/>
            <person name="Hogues H."/>
            <person name="Cuomo C."/>
            <person name="Berriman M."/>
            <person name="Scherer S."/>
            <person name="Magee B.B."/>
            <person name="Whiteway M."/>
            <person name="Chibana H."/>
            <person name="Nantel A."/>
            <person name="Magee P.T."/>
        </authorList>
    </citation>
    <scope>GENOME REANNOTATION</scope>
    <source>
        <strain>SC5314 / ATCC MYA-2876</strain>
    </source>
</reference>
<reference key="3">
    <citation type="journal article" date="2013" name="Genome Biol.">
        <title>Assembly of a phased diploid Candida albicans genome facilitates allele-specific measurements and provides a simple model for repeat and indel structure.</title>
        <authorList>
            <person name="Muzzey D."/>
            <person name="Schwartz K."/>
            <person name="Weissman J.S."/>
            <person name="Sherlock G."/>
        </authorList>
    </citation>
    <scope>NUCLEOTIDE SEQUENCE [LARGE SCALE GENOMIC DNA]</scope>
    <scope>GENOME REANNOTATION</scope>
    <source>
        <strain>SC5314 / ATCC MYA-2876</strain>
    </source>
</reference>
<gene>
    <name type="primary">CCM1</name>
    <name type="ordered locus">CAALFM_C603440WA</name>
    <name type="ORF">CaO19.13127</name>
    <name type="ORF">CaO19.5704</name>
</gene>
<name>CCM1_CANAL</name>
<protein>
    <recommendedName>
        <fullName>Mitochondrial 15S rRNA processing factor CCM1</fullName>
    </recommendedName>
</protein>
<comment type="function">
    <text evidence="1">Regulates mitochondrial small subunit maturation by controlling 15S rRNA 5'-end processing. Localizes to the 5' precursor of the 15S rRNA in a position that is subsequently occupied by mS47 in the mature yeast mtSSU. Uses structure and sequence-specific RNA recognition, binding to a single-stranded region of the precursor and specifically recognizing bases -6 to -1. The exchange of Ccm1 for mS47 is coupled to the irreversible removal of precursor rRNA that is accompanied by conformational changes of the mitoribosomal proteins uS5m and mS26. These conformational changes signal completion of 5'-end rRNA processing through protection of the mature 5'-end of the 15S rRNA and stabilization of mS47. The removal of the 5' precursor together with the dissociation of Ccm1 may be catalyzed by the 5'-3' exoribonuclease Pet127. Involved in the specific removal of group I introns in mitochondrial encoded transcripts.</text>
</comment>
<comment type="subunit">
    <text evidence="1">Binds to mitochondrial small subunit 15S rRNA.</text>
</comment>
<comment type="subcellular location">
    <subcellularLocation>
        <location evidence="1">Mitochondrion</location>
    </subcellularLocation>
</comment>
<comment type="miscellaneous">
    <text evidence="1">Involved in mitochondrial-nuclear incompatibility, a major determinant in reproductive isolation between species, through hybrid incompatibility of Ccm1 and its interacting partner 15S rRNA between yeast species.</text>
</comment>
<comment type="similarity">
    <text evidence="5">Belongs to the CCM1 family.</text>
</comment>